<evidence type="ECO:0000255" key="1">
    <source>
        <dbReference type="HAMAP-Rule" id="MF_00279"/>
    </source>
</evidence>
<organism>
    <name type="scientific">Burkholderia lata (strain ATCC 17760 / DSM 23089 / LMG 22485 / NCIMB 9086 / R18194 / 383)</name>
    <dbReference type="NCBI Taxonomy" id="482957"/>
    <lineage>
        <taxon>Bacteria</taxon>
        <taxon>Pseudomonadati</taxon>
        <taxon>Pseudomonadota</taxon>
        <taxon>Betaproteobacteria</taxon>
        <taxon>Burkholderiales</taxon>
        <taxon>Burkholderiaceae</taxon>
        <taxon>Burkholderia</taxon>
        <taxon>Burkholderia cepacia complex</taxon>
    </lineage>
</organism>
<sequence length="258" mass="27944">MSFFLTTPTAIDLGVNIDHVATLRNVRGTTYPDPIRAALAAEEAGADAITLHLREDRRHIVDADVRKLRPLLKTRMNLECAVTTEMLDIACEVRPHDACLVPEKREELTTEGGLDVAGHFEAVRAACKQLADVGVRVSLFIDPDETQIRAAHEAGAPVIELHTGRYAEAHDEAEQQREYERIVAGVQAGAQLGLKVNAGHGLHYTNVQQIAAIDGIVELNIGHAIVAHAIFAGWDNAVREMKAIMVAARVAALHGGAR</sequence>
<accession>Q39I70</accession>
<protein>
    <recommendedName>
        <fullName evidence="1">Pyridoxine 5'-phosphate synthase</fullName>
        <shortName evidence="1">PNP synthase</shortName>
        <ecNumber evidence="1">2.6.99.2</ecNumber>
    </recommendedName>
</protein>
<reference key="1">
    <citation type="submission" date="2005-10" db="EMBL/GenBank/DDBJ databases">
        <title>Complete sequence of chromosome 1 of Burkholderia sp. 383.</title>
        <authorList>
            <consortium name="US DOE Joint Genome Institute"/>
            <person name="Copeland A."/>
            <person name="Lucas S."/>
            <person name="Lapidus A."/>
            <person name="Barry K."/>
            <person name="Detter J.C."/>
            <person name="Glavina T."/>
            <person name="Hammon N."/>
            <person name="Israni S."/>
            <person name="Pitluck S."/>
            <person name="Chain P."/>
            <person name="Malfatti S."/>
            <person name="Shin M."/>
            <person name="Vergez L."/>
            <person name="Schmutz J."/>
            <person name="Larimer F."/>
            <person name="Land M."/>
            <person name="Kyrpides N."/>
            <person name="Lykidis A."/>
            <person name="Richardson P."/>
        </authorList>
    </citation>
    <scope>NUCLEOTIDE SEQUENCE [LARGE SCALE GENOMIC DNA]</scope>
    <source>
        <strain>ATCC 17760 / DSM 23089 / LMG 22485 / NCIMB 9086 / R18194 / 383</strain>
    </source>
</reference>
<gene>
    <name evidence="1" type="primary">pdxJ</name>
    <name type="ordered locus">Bcep18194_A4249</name>
</gene>
<comment type="function">
    <text evidence="1">Catalyzes the complicated ring closure reaction between the two acyclic compounds 1-deoxy-D-xylulose-5-phosphate (DXP) and 3-amino-2-oxopropyl phosphate (1-amino-acetone-3-phosphate or AAP) to form pyridoxine 5'-phosphate (PNP) and inorganic phosphate.</text>
</comment>
<comment type="catalytic activity">
    <reaction evidence="1">
        <text>3-amino-2-oxopropyl phosphate + 1-deoxy-D-xylulose 5-phosphate = pyridoxine 5'-phosphate + phosphate + 2 H2O + H(+)</text>
        <dbReference type="Rhea" id="RHEA:15265"/>
        <dbReference type="ChEBI" id="CHEBI:15377"/>
        <dbReference type="ChEBI" id="CHEBI:15378"/>
        <dbReference type="ChEBI" id="CHEBI:43474"/>
        <dbReference type="ChEBI" id="CHEBI:57279"/>
        <dbReference type="ChEBI" id="CHEBI:57792"/>
        <dbReference type="ChEBI" id="CHEBI:58589"/>
        <dbReference type="EC" id="2.6.99.2"/>
    </reaction>
</comment>
<comment type="pathway">
    <text evidence="1">Cofactor biosynthesis; pyridoxine 5'-phosphate biosynthesis; pyridoxine 5'-phosphate from D-erythrose 4-phosphate: step 5/5.</text>
</comment>
<comment type="subunit">
    <text evidence="1">Homooctamer; tetramer of dimers.</text>
</comment>
<comment type="subcellular location">
    <subcellularLocation>
        <location evidence="1">Cytoplasm</location>
    </subcellularLocation>
</comment>
<comment type="similarity">
    <text evidence="1">Belongs to the PNP synthase family.</text>
</comment>
<feature type="chain" id="PRO_0000231795" description="Pyridoxine 5'-phosphate synthase">
    <location>
        <begin position="1"/>
        <end position="258"/>
    </location>
</feature>
<feature type="active site" description="Proton acceptor" evidence="1">
    <location>
        <position position="52"/>
    </location>
</feature>
<feature type="active site" description="Proton acceptor" evidence="1">
    <location>
        <position position="79"/>
    </location>
</feature>
<feature type="active site" description="Proton donor" evidence="1">
    <location>
        <position position="200"/>
    </location>
</feature>
<feature type="binding site" evidence="1">
    <location>
        <position position="16"/>
    </location>
    <ligand>
        <name>3-amino-2-oxopropyl phosphate</name>
        <dbReference type="ChEBI" id="CHEBI:57279"/>
    </ligand>
</feature>
<feature type="binding site" evidence="1">
    <location>
        <begin position="18"/>
        <end position="19"/>
    </location>
    <ligand>
        <name>1-deoxy-D-xylulose 5-phosphate</name>
        <dbReference type="ChEBI" id="CHEBI:57792"/>
    </ligand>
</feature>
<feature type="binding site" evidence="1">
    <location>
        <position position="27"/>
    </location>
    <ligand>
        <name>3-amino-2-oxopropyl phosphate</name>
        <dbReference type="ChEBI" id="CHEBI:57279"/>
    </ligand>
</feature>
<feature type="binding site" evidence="1">
    <location>
        <position position="54"/>
    </location>
    <ligand>
        <name>1-deoxy-D-xylulose 5-phosphate</name>
        <dbReference type="ChEBI" id="CHEBI:57792"/>
    </ligand>
</feature>
<feature type="binding site" evidence="1">
    <location>
        <position position="59"/>
    </location>
    <ligand>
        <name>1-deoxy-D-xylulose 5-phosphate</name>
        <dbReference type="ChEBI" id="CHEBI:57792"/>
    </ligand>
</feature>
<feature type="binding site" evidence="1">
    <location>
        <position position="109"/>
    </location>
    <ligand>
        <name>1-deoxy-D-xylulose 5-phosphate</name>
        <dbReference type="ChEBI" id="CHEBI:57792"/>
    </ligand>
</feature>
<feature type="binding site" evidence="1">
    <location>
        <position position="201"/>
    </location>
    <ligand>
        <name>3-amino-2-oxopropyl phosphate</name>
        <dbReference type="ChEBI" id="CHEBI:57279"/>
    </ligand>
</feature>
<feature type="binding site" evidence="1">
    <location>
        <begin position="222"/>
        <end position="223"/>
    </location>
    <ligand>
        <name>3-amino-2-oxopropyl phosphate</name>
        <dbReference type="ChEBI" id="CHEBI:57279"/>
    </ligand>
</feature>
<feature type="site" description="Transition state stabilizer" evidence="1">
    <location>
        <position position="160"/>
    </location>
</feature>
<proteinExistence type="inferred from homology"/>
<keyword id="KW-0963">Cytoplasm</keyword>
<keyword id="KW-0664">Pyridoxine biosynthesis</keyword>
<keyword id="KW-0808">Transferase</keyword>
<dbReference type="EC" id="2.6.99.2" evidence="1"/>
<dbReference type="EMBL" id="CP000151">
    <property type="protein sequence ID" value="ABB07846.1"/>
    <property type="molecule type" value="Genomic_DNA"/>
</dbReference>
<dbReference type="RefSeq" id="WP_011351417.1">
    <property type="nucleotide sequence ID" value="NC_007510.1"/>
</dbReference>
<dbReference type="SMR" id="Q39I70"/>
<dbReference type="GeneID" id="45094150"/>
<dbReference type="KEGG" id="bur:Bcep18194_A4249"/>
<dbReference type="PATRIC" id="fig|482957.22.peg.1141"/>
<dbReference type="HOGENOM" id="CLU_074563_0_0_4"/>
<dbReference type="UniPathway" id="UPA00244">
    <property type="reaction ID" value="UER00313"/>
</dbReference>
<dbReference type="Proteomes" id="UP000002705">
    <property type="component" value="Chromosome 1"/>
</dbReference>
<dbReference type="GO" id="GO:0005829">
    <property type="term" value="C:cytosol"/>
    <property type="evidence" value="ECO:0007669"/>
    <property type="project" value="TreeGrafter"/>
</dbReference>
<dbReference type="GO" id="GO:0033856">
    <property type="term" value="F:pyridoxine 5'-phosphate synthase activity"/>
    <property type="evidence" value="ECO:0007669"/>
    <property type="project" value="UniProtKB-EC"/>
</dbReference>
<dbReference type="GO" id="GO:0008615">
    <property type="term" value="P:pyridoxine biosynthetic process"/>
    <property type="evidence" value="ECO:0007669"/>
    <property type="project" value="UniProtKB-UniRule"/>
</dbReference>
<dbReference type="CDD" id="cd00003">
    <property type="entry name" value="PNPsynthase"/>
    <property type="match status" value="1"/>
</dbReference>
<dbReference type="FunFam" id="3.20.20.70:FF:000042">
    <property type="entry name" value="Pyridoxine 5'-phosphate synthase"/>
    <property type="match status" value="1"/>
</dbReference>
<dbReference type="Gene3D" id="3.20.20.70">
    <property type="entry name" value="Aldolase class I"/>
    <property type="match status" value="1"/>
</dbReference>
<dbReference type="HAMAP" id="MF_00279">
    <property type="entry name" value="PdxJ"/>
    <property type="match status" value="1"/>
</dbReference>
<dbReference type="InterPro" id="IPR013785">
    <property type="entry name" value="Aldolase_TIM"/>
</dbReference>
<dbReference type="InterPro" id="IPR004569">
    <property type="entry name" value="PyrdxlP_synth_PdxJ"/>
</dbReference>
<dbReference type="InterPro" id="IPR036130">
    <property type="entry name" value="Pyridoxine-5'_phos_synth"/>
</dbReference>
<dbReference type="NCBIfam" id="TIGR00559">
    <property type="entry name" value="pdxJ"/>
    <property type="match status" value="1"/>
</dbReference>
<dbReference type="NCBIfam" id="NF003623">
    <property type="entry name" value="PRK05265.1-1"/>
    <property type="match status" value="1"/>
</dbReference>
<dbReference type="NCBIfam" id="NF003624">
    <property type="entry name" value="PRK05265.1-2"/>
    <property type="match status" value="1"/>
</dbReference>
<dbReference type="NCBIfam" id="NF003625">
    <property type="entry name" value="PRK05265.1-3"/>
    <property type="match status" value="1"/>
</dbReference>
<dbReference type="NCBIfam" id="NF003627">
    <property type="entry name" value="PRK05265.1-5"/>
    <property type="match status" value="1"/>
</dbReference>
<dbReference type="PANTHER" id="PTHR30456">
    <property type="entry name" value="PYRIDOXINE 5'-PHOSPHATE SYNTHASE"/>
    <property type="match status" value="1"/>
</dbReference>
<dbReference type="PANTHER" id="PTHR30456:SF0">
    <property type="entry name" value="PYRIDOXINE 5'-PHOSPHATE SYNTHASE"/>
    <property type="match status" value="1"/>
</dbReference>
<dbReference type="Pfam" id="PF03740">
    <property type="entry name" value="PdxJ"/>
    <property type="match status" value="1"/>
</dbReference>
<dbReference type="SUPFAM" id="SSF63892">
    <property type="entry name" value="Pyridoxine 5'-phosphate synthase"/>
    <property type="match status" value="1"/>
</dbReference>
<name>PDXJ_BURL3</name>